<reference key="1">
    <citation type="journal article" date="1988" name="J. Gen. Virol.">
        <title>Typing hepatitis B virus by homology in nucleotide sequence: comparison of surface antigen subtypes.</title>
        <authorList>
            <person name="Okamoto H."/>
            <person name="Tsuda F."/>
            <person name="Sakugawa H."/>
            <person name="Sastrosoewignjo R.I."/>
            <person name="Imai M."/>
            <person name="Miyakawa Y."/>
            <person name="Mayumi M."/>
        </authorList>
    </citation>
    <scope>NUCLEOTIDE SEQUENCE [GENOMIC DNA]</scope>
</reference>
<reference key="2">
    <citation type="journal article" date="1996" name="Intervirology">
        <title>Functions of the large hepatitis B virus surface protein in viral particle morphogenesis.</title>
        <authorList>
            <person name="Bruss V."/>
            <person name="Gerhardt E."/>
            <person name="Vieluf K."/>
            <person name="Wunderlich G."/>
        </authorList>
    </citation>
    <scope>REVIEW</scope>
</reference>
<reference key="3">
    <citation type="journal article" date="1998" name="Adv. Exp. Med. Biol.">
        <title>Role of glycan processing in hepatitis B virus envelope protein trafficking.</title>
        <authorList>
            <person name="Block T.M."/>
            <person name="Lu X."/>
            <person name="Mehta A."/>
            <person name="Park J."/>
            <person name="Blumberg B.S."/>
            <person name="Dwek R."/>
        </authorList>
    </citation>
    <scope>REVIEW</scope>
</reference>
<reference key="4">
    <citation type="journal article" date="2004" name="Virus Res.">
        <title>Envelopment of the hepatitis B virus nucleocapsid.</title>
        <authorList>
            <person name="Bruss V."/>
        </authorList>
    </citation>
    <scope>REVIEW</scope>
</reference>
<reference key="5">
    <citation type="journal article" date="2006" name="Cancer Sci.">
        <title>Hepatitis B virus pre-S mutants, endoplasmic reticulum stress and hepatocarcinogenesis.</title>
        <authorList>
            <person name="Wang H.C."/>
            <person name="Huang W."/>
            <person name="Lai M.D."/>
            <person name="Su I.J."/>
        </authorList>
    </citation>
    <scope>REVIEW</scope>
</reference>
<name>HBSAG_HBVB4</name>
<proteinExistence type="evidence at protein level"/>
<gene>
    <name evidence="4" type="primary">S</name>
</gene>
<dbReference type="EMBL" id="D00330">
    <property type="status" value="NOT_ANNOTATED_CDS"/>
    <property type="molecule type" value="Genomic_DNA"/>
</dbReference>
<dbReference type="PIR" id="H28925">
    <property type="entry name" value="SAVLJ2"/>
</dbReference>
<dbReference type="SMR" id="P17399"/>
<dbReference type="GlyCosmos" id="P17399">
    <property type="glycosylation" value="1 site, No reported glycans"/>
</dbReference>
<dbReference type="Proteomes" id="UP000007916">
    <property type="component" value="Genome"/>
</dbReference>
<dbReference type="GO" id="GO:0016020">
    <property type="term" value="C:membrane"/>
    <property type="evidence" value="ECO:0007669"/>
    <property type="project" value="UniProtKB-UniRule"/>
</dbReference>
<dbReference type="GO" id="GO:0019031">
    <property type="term" value="C:viral envelope"/>
    <property type="evidence" value="ECO:0007669"/>
    <property type="project" value="UniProtKB-KW"/>
</dbReference>
<dbReference type="GO" id="GO:0055036">
    <property type="term" value="C:virion membrane"/>
    <property type="evidence" value="ECO:0007669"/>
    <property type="project" value="UniProtKB-SubCell"/>
</dbReference>
<dbReference type="GO" id="GO:0075513">
    <property type="term" value="P:caveolin-mediated endocytosis of virus by host cell"/>
    <property type="evidence" value="ECO:0007669"/>
    <property type="project" value="UniProtKB-KW"/>
</dbReference>
<dbReference type="GO" id="GO:0039654">
    <property type="term" value="P:fusion of virus membrane with host endosome membrane"/>
    <property type="evidence" value="ECO:0007669"/>
    <property type="project" value="UniProtKB-KW"/>
</dbReference>
<dbReference type="GO" id="GO:0019062">
    <property type="term" value="P:virion attachment to host cell"/>
    <property type="evidence" value="ECO:0007669"/>
    <property type="project" value="UniProtKB-UniRule"/>
</dbReference>
<dbReference type="HAMAP" id="MF_04075">
    <property type="entry name" value="HBV_HBSAG"/>
    <property type="match status" value="1"/>
</dbReference>
<dbReference type="InterPro" id="IPR000349">
    <property type="entry name" value="HBV_HBSAG"/>
</dbReference>
<dbReference type="Pfam" id="PF00695">
    <property type="entry name" value="vMSA"/>
    <property type="match status" value="1"/>
</dbReference>
<feature type="initiator methionine" description="Removed; by host" evidence="4">
    <location>
        <position position="1"/>
    </location>
</feature>
<feature type="chain" id="PRO_0000038103" description="Large envelope protein" evidence="4">
    <location>
        <begin position="2"/>
        <end position="389"/>
    </location>
</feature>
<feature type="topological domain" description="Intravirion; in internal conformation" evidence="4">
    <location>
        <begin position="2"/>
        <end position="242"/>
    </location>
</feature>
<feature type="topological domain" description="Virion surface; in external conformation" evidence="4">
    <location>
        <begin position="2"/>
        <end position="170"/>
    </location>
</feature>
<feature type="transmembrane region" description="Helical; Name=TM1; Note=In external conformation" evidence="4">
    <location>
        <begin position="171"/>
        <end position="191"/>
    </location>
</feature>
<feature type="topological domain" description="Intravirion; in external conformation" evidence="4">
    <location>
        <begin position="192"/>
        <end position="242"/>
    </location>
</feature>
<feature type="transmembrane region" description="Helical; Name=TM2" evidence="4">
    <location>
        <begin position="243"/>
        <end position="263"/>
    </location>
</feature>
<feature type="topological domain" description="Virion surface" evidence="4">
    <location>
        <begin position="264"/>
        <end position="337"/>
    </location>
</feature>
<feature type="transmembrane region" description="Helical" evidence="4">
    <location>
        <begin position="338"/>
        <end position="358"/>
    </location>
</feature>
<feature type="topological domain" description="Intravirion" evidence="4">
    <location>
        <begin position="359"/>
        <end position="364"/>
    </location>
</feature>
<feature type="transmembrane region" description="Helical; Name=TM3" evidence="4">
    <location>
        <begin position="365"/>
        <end position="387"/>
    </location>
</feature>
<feature type="topological domain" description="Virion surface" evidence="4">
    <location>
        <begin position="388"/>
        <end position="389"/>
    </location>
</feature>
<feature type="region of interest" description="Pre-S" evidence="4">
    <location>
        <begin position="2"/>
        <end position="163"/>
    </location>
</feature>
<feature type="region of interest" description="Pre-S1" evidence="4">
    <location>
        <begin position="2"/>
        <end position="108"/>
    </location>
</feature>
<feature type="region of interest" description="Disordered" evidence="5">
    <location>
        <begin position="74"/>
        <end position="103"/>
    </location>
</feature>
<feature type="region of interest" description="Pre-S2" evidence="4">
    <location>
        <begin position="109"/>
        <end position="163"/>
    </location>
</feature>
<feature type="compositionally biased region" description="Polar residues" evidence="5">
    <location>
        <begin position="85"/>
        <end position="95"/>
    </location>
</feature>
<feature type="lipid moiety-binding region" description="N-myristoyl glycine; by host" evidence="4">
    <location>
        <position position="2"/>
    </location>
</feature>
<feature type="glycosylation site" description="N-linked (GlcNAc...) asparagine; by host" evidence="4">
    <location>
        <position position="309"/>
    </location>
</feature>
<feature type="splice variant" id="VSP_031373" description="In isoform S." evidence="6">
    <location>
        <begin position="1"/>
        <end position="163"/>
    </location>
</feature>
<feature type="splice variant" id="VSP_031374" description="In isoform M." evidence="6">
    <location>
        <begin position="1"/>
        <end position="108"/>
    </location>
</feature>
<feature type="modified residue" description="N-acetylmethionine" evidence="1">
    <location sequence="P17399-2">
        <position position="1"/>
    </location>
</feature>
<accession>P17399</accession>
<organism>
    <name type="scientific">Hepatitis B virus genotype B/C subtype adw (isolate Okinawa/pODW282/1998)</name>
    <name type="common">HBV-B</name>
    <dbReference type="NCBI Taxonomy" id="10415"/>
    <lineage>
        <taxon>Viruses</taxon>
        <taxon>Riboviria</taxon>
        <taxon>Pararnavirae</taxon>
        <taxon>Artverviricota</taxon>
        <taxon>Revtraviricetes</taxon>
        <taxon>Blubervirales</taxon>
        <taxon>Hepadnaviridae</taxon>
        <taxon>Orthohepadnavirus</taxon>
        <taxon>Hepatitis B virus</taxon>
    </lineage>
</organism>
<sequence>MGTNLSVPNPLGFFPDHQLDPAFKANSENPDWDLNPNKDNWPDANKVGVGAFGPGFTPPHGGLLGWSPQAQGLLTTVPAAPPPASTNRQSGRQPTPLSPPLRDTHPQAMQWNSTTFHQTLQDPGVRALYFPAGGSSSGTVSPAQNTVSAISSILSKTGDPVPNMENIASGLLGPLLVLQAGFFLLTKILTIPQSLDSWWTSLNFLGGTPVCLGQNSQSQISSHSPTCCPPICPGYRWMCLRRFIIFLCILLLCLIFLLVLLDYQGMLPVCPLIPGSSTTSTGPCKTCTTPAQGTSMFPSCCCTKPTDGNCTCIPIPSSWAFAKYLWEWASVRFSWLSLLVPFVQWFVGLSPTVWLSVIWMIWFWGPSLYNILSPFMPLLPIFFCLWVYI</sequence>
<evidence type="ECO:0000250" key="1">
    <source>
        <dbReference type="UniProtKB" id="P03138"/>
    </source>
</evidence>
<evidence type="ECO:0000250" key="2">
    <source>
        <dbReference type="UniProtKB" id="P03141"/>
    </source>
</evidence>
<evidence type="ECO:0000250" key="3">
    <source>
        <dbReference type="UniProtKB" id="Q9PWW3"/>
    </source>
</evidence>
<evidence type="ECO:0000255" key="4">
    <source>
        <dbReference type="HAMAP-Rule" id="MF_04075"/>
    </source>
</evidence>
<evidence type="ECO:0000256" key="5">
    <source>
        <dbReference type="SAM" id="MobiDB-lite"/>
    </source>
</evidence>
<evidence type="ECO:0000305" key="6"/>
<keyword id="KW-0007">Acetylation</keyword>
<keyword id="KW-0024">Alternative initiation</keyword>
<keyword id="KW-0025">Alternative splicing</keyword>
<keyword id="KW-1166">Caveolin-mediated endocytosis of virus by host</keyword>
<keyword id="KW-1170">Fusion of virus membrane with host endosomal membrane</keyword>
<keyword id="KW-1168">Fusion of virus membrane with host membrane</keyword>
<keyword id="KW-0325">Glycoprotein</keyword>
<keyword id="KW-0945">Host-virus interaction</keyword>
<keyword id="KW-0449">Lipoprotein</keyword>
<keyword id="KW-0472">Membrane</keyword>
<keyword id="KW-0519">Myristate</keyword>
<keyword id="KW-0812">Transmembrane</keyword>
<keyword id="KW-1133">Transmembrane helix</keyword>
<keyword id="KW-1161">Viral attachment to host cell</keyword>
<keyword id="KW-0261">Viral envelope protein</keyword>
<keyword id="KW-1162">Viral penetration into host cytoplasm</keyword>
<keyword id="KW-0946">Virion</keyword>
<keyword id="KW-1164">Virus endocytosis by host</keyword>
<keyword id="KW-1160">Virus entry into host cell</keyword>
<organismHost>
    <name type="scientific">Homo sapiens</name>
    <name type="common">Human</name>
    <dbReference type="NCBI Taxonomy" id="9606"/>
</organismHost>
<organismHost>
    <name type="scientific">Pan troglodytes</name>
    <name type="common">Chimpanzee</name>
    <dbReference type="NCBI Taxonomy" id="9598"/>
</organismHost>
<comment type="function">
    <text evidence="4">The large envelope protein exists in two topological conformations, one which is termed 'external' or Le-HBsAg and the other 'internal' or Li-HBsAg. In its external conformation the protein attaches the virus to cell receptors and thereby initiating infection. This interaction determines the species specificity and liver tropism. This attachment induces virion internalization predominantly through caveolin-mediated endocytosis. The large envelope protein also assures fusion between virion membrane and endosomal membrane. In its internal conformation the protein plays a role in virion morphogenesis and mediates the contact with the nucleocapsid like a matrix protein.</text>
</comment>
<comment type="function">
    <text evidence="4">The middle envelope protein plays an important role in the budding of the virion. It is involved in the induction of budding in a nucleocapsid independent way. In this process the majority of envelope proteins bud to form subviral lipoprotein particles of 22 nm of diameter that do not contain a nucleocapsid.</text>
</comment>
<comment type="subunit">
    <text evidence="3">Interacts (via its myristoylated pre-S1 region) with the host SLC10A1/NTCP; this interaction is essential for viral entry.</text>
</comment>
<comment type="subunit">
    <molecule>Isoform L</molecule>
    <text evidence="2">In its internal form (Li-HBsAg), interacts with the capsid protein and with the isoform S. Interacts with host chaperone CANX.</text>
</comment>
<comment type="subunit">
    <molecule>Isoform M</molecule>
    <text evidence="2">Associates with host chaperone CANX through its pre-S2 N glycan; this association may be essential for isoform M proper secretion.</text>
</comment>
<comment type="subunit">
    <molecule>Isoform S</molecule>
    <text evidence="2">Interacts with isoform L. Interacts with the antigens of satellite virus HDV (HDVAgs); this interaction is required for encapsidation of HDV genomic RNA.</text>
</comment>
<comment type="subcellular location">
    <subcellularLocation>
        <location evidence="4">Virion membrane</location>
    </subcellularLocation>
</comment>
<comment type="alternative products">
    <event type="alternative splicing"/>
    <event type="alternative initiation"/>
    <isoform>
        <id>P17399-1</id>
        <name>L</name>
        <name>Large envelope protein</name>
        <name>LHB</name>
        <name>L-HBsAg</name>
        <sequence type="displayed"/>
    </isoform>
    <isoform>
        <id>P17399-2</id>
        <name>M</name>
        <name>Middle envelope protein</name>
        <name>MHB</name>
        <name>M-HBsAg</name>
        <sequence type="described" ref="VSP_031374"/>
    </isoform>
    <isoform>
        <id>P17399-3</id>
        <name>S</name>
        <name>Small envelope protein</name>
        <name>SHB</name>
        <name>S-HBsAg</name>
        <sequence type="described" ref="VSP_031373"/>
    </isoform>
</comment>
<comment type="domain">
    <text evidence="4">The large envelope protein is synthesized with the pre-S region at the cytosolic side of the endoplasmic reticulum and, hence will be within the virion after budding. Therefore the pre-S region is not N-glycosylated. Later a post-translational translocation of N-terminal pre-S and TM1 domains occur in about 50% of proteins at the virion surface. These molecules change their topology by an unknown mechanism, resulting in exposure of pre-S region at virion surface. For isoform M in contrast, the pre-S2 region is translocated cotranslationally to the endoplasmic reticulum lumen and is N-glycosylated.</text>
</comment>
<comment type="PTM">
    <text evidence="1 4">Isoform M is N-terminally acetylated by host at a ratio of 90%, and N-glycosylated by host at the pre-S2 region.</text>
</comment>
<comment type="PTM">
    <text evidence="3 4">Myristoylated; this modification is essential for its interaction with the host protein SLC10A1/NTCP.</text>
</comment>
<comment type="biotechnology">
    <text>Systematic vaccination of individuals at risk of exposure to the virus has been the main method of controlling the morbidity and mortality associated with hepatitis B. The first hepatitis B vaccine was manufactured by the purification and inactivation of HBsAg obtained from the plasma of chronic hepatitis B virus carriers. The vaccine is now produced by recombinant DNA techniques and expression of the S isoform in yeast cells. The pre-S region do not seem to induce strong enough antigenic response.</text>
</comment>
<comment type="similarity">
    <text evidence="4">Belongs to the orthohepadnavirus major surface antigen family.</text>
</comment>
<protein>
    <recommendedName>
        <fullName evidence="4">Large envelope protein</fullName>
    </recommendedName>
    <alternativeName>
        <fullName evidence="4">L glycoprotein</fullName>
    </alternativeName>
    <alternativeName>
        <fullName evidence="4">L-HBsAg</fullName>
        <shortName evidence="4">LHB</shortName>
    </alternativeName>
    <alternativeName>
        <fullName evidence="4">Large S protein</fullName>
    </alternativeName>
    <alternativeName>
        <fullName evidence="4">Large surface protein</fullName>
    </alternativeName>
    <alternativeName>
        <fullName evidence="4">Major surface antigen</fullName>
    </alternativeName>
</protein>